<dbReference type="EC" id="3.6.5.-" evidence="1"/>
<dbReference type="EMBL" id="CP001020">
    <property type="protein sequence ID" value="ACJ20816.1"/>
    <property type="molecule type" value="Genomic_DNA"/>
</dbReference>
<dbReference type="RefSeq" id="WP_005771976.1">
    <property type="nucleotide sequence ID" value="NC_011528.1"/>
</dbReference>
<dbReference type="SMR" id="B6J9K2"/>
<dbReference type="KEGG" id="cbc:CbuK_1675"/>
<dbReference type="HOGENOM" id="CLU_011747_2_0_6"/>
<dbReference type="GO" id="GO:0005737">
    <property type="term" value="C:cytoplasm"/>
    <property type="evidence" value="ECO:0007669"/>
    <property type="project" value="UniProtKB-SubCell"/>
</dbReference>
<dbReference type="GO" id="GO:0005525">
    <property type="term" value="F:GTP binding"/>
    <property type="evidence" value="ECO:0007669"/>
    <property type="project" value="UniProtKB-UniRule"/>
</dbReference>
<dbReference type="GO" id="GO:0003924">
    <property type="term" value="F:GTPase activity"/>
    <property type="evidence" value="ECO:0007669"/>
    <property type="project" value="UniProtKB-UniRule"/>
</dbReference>
<dbReference type="GO" id="GO:0000287">
    <property type="term" value="F:magnesium ion binding"/>
    <property type="evidence" value="ECO:0007669"/>
    <property type="project" value="InterPro"/>
</dbReference>
<dbReference type="GO" id="GO:0042254">
    <property type="term" value="P:ribosome biogenesis"/>
    <property type="evidence" value="ECO:0007669"/>
    <property type="project" value="UniProtKB-UniRule"/>
</dbReference>
<dbReference type="CDD" id="cd01898">
    <property type="entry name" value="Obg"/>
    <property type="match status" value="1"/>
</dbReference>
<dbReference type="FunFam" id="2.70.210.12:FF:000001">
    <property type="entry name" value="GTPase Obg"/>
    <property type="match status" value="1"/>
</dbReference>
<dbReference type="Gene3D" id="2.70.210.12">
    <property type="entry name" value="GTP1/OBG domain"/>
    <property type="match status" value="1"/>
</dbReference>
<dbReference type="Gene3D" id="3.40.50.300">
    <property type="entry name" value="P-loop containing nucleotide triphosphate hydrolases"/>
    <property type="match status" value="1"/>
</dbReference>
<dbReference type="HAMAP" id="MF_01454">
    <property type="entry name" value="GTPase_Obg"/>
    <property type="match status" value="1"/>
</dbReference>
<dbReference type="InterPro" id="IPR031167">
    <property type="entry name" value="G_OBG"/>
</dbReference>
<dbReference type="InterPro" id="IPR006073">
    <property type="entry name" value="GTP-bd"/>
</dbReference>
<dbReference type="InterPro" id="IPR014100">
    <property type="entry name" value="GTP-bd_Obg/CgtA"/>
</dbReference>
<dbReference type="InterPro" id="IPR006074">
    <property type="entry name" value="GTP1-OBG_CS"/>
</dbReference>
<dbReference type="InterPro" id="IPR006169">
    <property type="entry name" value="GTP1_OBG_dom"/>
</dbReference>
<dbReference type="InterPro" id="IPR036726">
    <property type="entry name" value="GTP1_OBG_dom_sf"/>
</dbReference>
<dbReference type="InterPro" id="IPR045086">
    <property type="entry name" value="OBG_GTPase"/>
</dbReference>
<dbReference type="InterPro" id="IPR027417">
    <property type="entry name" value="P-loop_NTPase"/>
</dbReference>
<dbReference type="NCBIfam" id="TIGR02729">
    <property type="entry name" value="Obg_CgtA"/>
    <property type="match status" value="1"/>
</dbReference>
<dbReference type="NCBIfam" id="NF008955">
    <property type="entry name" value="PRK12297.1"/>
    <property type="match status" value="1"/>
</dbReference>
<dbReference type="NCBIfam" id="NF008956">
    <property type="entry name" value="PRK12299.1"/>
    <property type="match status" value="1"/>
</dbReference>
<dbReference type="PANTHER" id="PTHR11702">
    <property type="entry name" value="DEVELOPMENTALLY REGULATED GTP-BINDING PROTEIN-RELATED"/>
    <property type="match status" value="1"/>
</dbReference>
<dbReference type="PANTHER" id="PTHR11702:SF31">
    <property type="entry name" value="MITOCHONDRIAL RIBOSOME-ASSOCIATED GTPASE 2"/>
    <property type="match status" value="1"/>
</dbReference>
<dbReference type="Pfam" id="PF01018">
    <property type="entry name" value="GTP1_OBG"/>
    <property type="match status" value="1"/>
</dbReference>
<dbReference type="Pfam" id="PF01926">
    <property type="entry name" value="MMR_HSR1"/>
    <property type="match status" value="1"/>
</dbReference>
<dbReference type="PIRSF" id="PIRSF002401">
    <property type="entry name" value="GTP_bd_Obg/CgtA"/>
    <property type="match status" value="1"/>
</dbReference>
<dbReference type="PRINTS" id="PR00326">
    <property type="entry name" value="GTP1OBG"/>
</dbReference>
<dbReference type="SUPFAM" id="SSF82051">
    <property type="entry name" value="Obg GTP-binding protein N-terminal domain"/>
    <property type="match status" value="1"/>
</dbReference>
<dbReference type="SUPFAM" id="SSF52540">
    <property type="entry name" value="P-loop containing nucleoside triphosphate hydrolases"/>
    <property type="match status" value="1"/>
</dbReference>
<dbReference type="PROSITE" id="PS51710">
    <property type="entry name" value="G_OBG"/>
    <property type="match status" value="1"/>
</dbReference>
<dbReference type="PROSITE" id="PS00905">
    <property type="entry name" value="GTP1_OBG"/>
    <property type="match status" value="1"/>
</dbReference>
<dbReference type="PROSITE" id="PS51883">
    <property type="entry name" value="OBG"/>
    <property type="match status" value="1"/>
</dbReference>
<proteinExistence type="inferred from homology"/>
<gene>
    <name evidence="1" type="primary">obg</name>
    <name type="ordered locus">CbuK_1675</name>
</gene>
<reference key="1">
    <citation type="journal article" date="2009" name="Infect. Immun.">
        <title>Comparative genomics reveal extensive transposon-mediated genomic plasticity and diversity among potential effector proteins within the genus Coxiella.</title>
        <authorList>
            <person name="Beare P.A."/>
            <person name="Unsworth N."/>
            <person name="Andoh M."/>
            <person name="Voth D.E."/>
            <person name="Omsland A."/>
            <person name="Gilk S.D."/>
            <person name="Williams K.P."/>
            <person name="Sobral B.W."/>
            <person name="Kupko J.J. III"/>
            <person name="Porcella S.F."/>
            <person name="Samuel J.E."/>
            <person name="Heinzen R.A."/>
        </authorList>
    </citation>
    <scope>NUCLEOTIDE SEQUENCE [LARGE SCALE GENOMIC DNA]</scope>
    <source>
        <strain>CbuK_Q154</strain>
    </source>
</reference>
<keyword id="KW-0963">Cytoplasm</keyword>
<keyword id="KW-0342">GTP-binding</keyword>
<keyword id="KW-0378">Hydrolase</keyword>
<keyword id="KW-0460">Magnesium</keyword>
<keyword id="KW-0479">Metal-binding</keyword>
<keyword id="KW-0547">Nucleotide-binding</keyword>
<accession>B6J9K2</accession>
<feature type="chain" id="PRO_0000385865" description="GTPase Obg">
    <location>
        <begin position="1"/>
        <end position="339"/>
    </location>
</feature>
<feature type="domain" description="Obg" evidence="2">
    <location>
        <begin position="1"/>
        <end position="159"/>
    </location>
</feature>
<feature type="domain" description="OBG-type G" evidence="1">
    <location>
        <begin position="160"/>
        <end position="333"/>
    </location>
</feature>
<feature type="region of interest" description="Disordered" evidence="3">
    <location>
        <begin position="127"/>
        <end position="147"/>
    </location>
</feature>
<feature type="binding site" evidence="1">
    <location>
        <begin position="166"/>
        <end position="173"/>
    </location>
    <ligand>
        <name>GTP</name>
        <dbReference type="ChEBI" id="CHEBI:37565"/>
    </ligand>
</feature>
<feature type="binding site" evidence="1">
    <location>
        <position position="173"/>
    </location>
    <ligand>
        <name>Mg(2+)</name>
        <dbReference type="ChEBI" id="CHEBI:18420"/>
    </ligand>
</feature>
<feature type="binding site" evidence="1">
    <location>
        <begin position="191"/>
        <end position="195"/>
    </location>
    <ligand>
        <name>GTP</name>
        <dbReference type="ChEBI" id="CHEBI:37565"/>
    </ligand>
</feature>
<feature type="binding site" evidence="1">
    <location>
        <position position="193"/>
    </location>
    <ligand>
        <name>Mg(2+)</name>
        <dbReference type="ChEBI" id="CHEBI:18420"/>
    </ligand>
</feature>
<feature type="binding site" evidence="1">
    <location>
        <begin position="213"/>
        <end position="216"/>
    </location>
    <ligand>
        <name>GTP</name>
        <dbReference type="ChEBI" id="CHEBI:37565"/>
    </ligand>
</feature>
<feature type="binding site" evidence="1">
    <location>
        <begin position="283"/>
        <end position="286"/>
    </location>
    <ligand>
        <name>GTP</name>
        <dbReference type="ChEBI" id="CHEBI:37565"/>
    </ligand>
</feature>
<feature type="binding site" evidence="1">
    <location>
        <begin position="314"/>
        <end position="316"/>
    </location>
    <ligand>
        <name>GTP</name>
        <dbReference type="ChEBI" id="CHEBI:37565"/>
    </ligand>
</feature>
<protein>
    <recommendedName>
        <fullName evidence="1">GTPase Obg</fullName>
        <ecNumber evidence="1">3.6.5.-</ecNumber>
    </recommendedName>
    <alternativeName>
        <fullName evidence="1">GTP-binding protein Obg</fullName>
    </alternativeName>
</protein>
<sequence length="339" mass="37140">MKFVDEAFVRVEAGNGGHGCLSFRREKFIPRGGPDGGDGGDGGSVYFVADKSVNTLVEFRYQRLLRAQNGQPGMGRLRSGKKGEDLIVPVPLGTTVYDKETSELIGDLIEAGDKLCVARGGRHGLGNTHFKSSTNRAPRRTTSGEEGEARELKLELKLLADVGLLGLPNAGKSTFIHAVSKATPKIADYPFTTLYPHLGVVRVEEYRSFVIADIPGLIEGASEGAGLGVQFLKHLERTQLLLHIVDIAPLDGSDPVQSIQAIISELEQFSQNLSQKPRWLVFNKIDLLAPDVAQARCQEIINRLNWKGPVYKISAIKRQGTELLCYDLMSFLETNQRSI</sequence>
<comment type="function">
    <text evidence="1">An essential GTPase which binds GTP, GDP and possibly (p)ppGpp with moderate affinity, with high nucleotide exchange rates and a fairly low GTP hydrolysis rate. Plays a role in control of the cell cycle, stress response, ribosome biogenesis and in those bacteria that undergo differentiation, in morphogenesis control.</text>
</comment>
<comment type="cofactor">
    <cofactor evidence="1">
        <name>Mg(2+)</name>
        <dbReference type="ChEBI" id="CHEBI:18420"/>
    </cofactor>
</comment>
<comment type="subunit">
    <text evidence="1">Monomer.</text>
</comment>
<comment type="subcellular location">
    <subcellularLocation>
        <location evidence="1">Cytoplasm</location>
    </subcellularLocation>
</comment>
<comment type="similarity">
    <text evidence="1">Belongs to the TRAFAC class OBG-HflX-like GTPase superfamily. OBG GTPase family.</text>
</comment>
<evidence type="ECO:0000255" key="1">
    <source>
        <dbReference type="HAMAP-Rule" id="MF_01454"/>
    </source>
</evidence>
<evidence type="ECO:0000255" key="2">
    <source>
        <dbReference type="PROSITE-ProRule" id="PRU01231"/>
    </source>
</evidence>
<evidence type="ECO:0000256" key="3">
    <source>
        <dbReference type="SAM" id="MobiDB-lite"/>
    </source>
</evidence>
<organism>
    <name type="scientific">Coxiella burnetii (strain CbuK_Q154)</name>
    <name type="common">Coxiella burnetii (strain Q154)</name>
    <dbReference type="NCBI Taxonomy" id="434924"/>
    <lineage>
        <taxon>Bacteria</taxon>
        <taxon>Pseudomonadati</taxon>
        <taxon>Pseudomonadota</taxon>
        <taxon>Gammaproteobacteria</taxon>
        <taxon>Legionellales</taxon>
        <taxon>Coxiellaceae</taxon>
        <taxon>Coxiella</taxon>
    </lineage>
</organism>
<name>OBG_COXB1</name>